<evidence type="ECO:0000250" key="1"/>
<evidence type="ECO:0000250" key="2">
    <source>
        <dbReference type="UniProtKB" id="P02340"/>
    </source>
</evidence>
<evidence type="ECO:0000250" key="3">
    <source>
        <dbReference type="UniProtKB" id="P04637"/>
    </source>
</evidence>
<evidence type="ECO:0000250" key="4">
    <source>
        <dbReference type="UniProtKB" id="P10361"/>
    </source>
</evidence>
<evidence type="ECO:0000256" key="5">
    <source>
        <dbReference type="SAM" id="MobiDB-lite"/>
    </source>
</evidence>
<evidence type="ECO:0000305" key="6"/>
<gene>
    <name type="primary">TP53</name>
    <name type="synonym">P53</name>
</gene>
<accession>P61260</accession>
<organism>
    <name type="scientific">Macaca fuscata fuscata</name>
    <name type="common">Japanese macaque</name>
    <dbReference type="NCBI Taxonomy" id="9543"/>
    <lineage>
        <taxon>Eukaryota</taxon>
        <taxon>Metazoa</taxon>
        <taxon>Chordata</taxon>
        <taxon>Craniata</taxon>
        <taxon>Vertebrata</taxon>
        <taxon>Euteleostomi</taxon>
        <taxon>Mammalia</taxon>
        <taxon>Eutheria</taxon>
        <taxon>Euarchontoglires</taxon>
        <taxon>Primates</taxon>
        <taxon>Haplorrhini</taxon>
        <taxon>Catarrhini</taxon>
        <taxon>Cercopithecidae</taxon>
        <taxon>Cercopithecinae</taxon>
        <taxon>Macaca</taxon>
    </lineage>
</organism>
<feature type="chain" id="PRO_0000185705" description="Cellular tumor antigen p53">
    <location>
        <begin position="1"/>
        <end position="393"/>
    </location>
</feature>
<feature type="DNA-binding region" evidence="3">
    <location>
        <begin position="102"/>
        <end position="292"/>
    </location>
</feature>
<feature type="region of interest" description="Interaction with CCAR2" evidence="3">
    <location>
        <begin position="1"/>
        <end position="320"/>
    </location>
</feature>
<feature type="region of interest" description="Interaction with HRMT1L2" evidence="1">
    <location>
        <begin position="1"/>
        <end position="83"/>
    </location>
</feature>
<feature type="region of interest" description="Transcription activation (acidic)">
    <location>
        <begin position="1"/>
        <end position="44"/>
    </location>
</feature>
<feature type="region of interest" description="Disordered" evidence="5">
    <location>
        <begin position="48"/>
        <end position="97"/>
    </location>
</feature>
<feature type="region of interest" description="Interaction with WWOX" evidence="1">
    <location>
        <begin position="66"/>
        <end position="110"/>
    </location>
</feature>
<feature type="region of interest" description="Required for interaction with ZNF385A" evidence="1">
    <location>
        <begin position="100"/>
        <end position="300"/>
    </location>
</feature>
<feature type="region of interest" description="Required for interaction with FBXO42" evidence="1">
    <location>
        <begin position="113"/>
        <end position="236"/>
    </location>
</feature>
<feature type="region of interest" description="Interaction with E4F1" evidence="1">
    <location>
        <begin position="256"/>
        <end position="294"/>
    </location>
</feature>
<feature type="region of interest" description="Interaction with DNA" evidence="1">
    <location>
        <begin position="273"/>
        <end position="280"/>
    </location>
</feature>
<feature type="region of interest" description="Disordered" evidence="5">
    <location>
        <begin position="283"/>
        <end position="325"/>
    </location>
</feature>
<feature type="region of interest" description="Interaction with CARM1" evidence="1">
    <location>
        <begin position="300"/>
        <end position="393"/>
    </location>
</feature>
<feature type="region of interest" description="Oligomerization">
    <location>
        <begin position="325"/>
        <end position="356"/>
    </location>
</feature>
<feature type="region of interest" description="Disordered" evidence="5">
    <location>
        <begin position="352"/>
        <end position="393"/>
    </location>
</feature>
<feature type="region of interest" description="Interaction with USP7" evidence="1">
    <location>
        <begin position="359"/>
        <end position="363"/>
    </location>
</feature>
<feature type="region of interest" description="Basic (repression of DNA-binding)">
    <location>
        <begin position="368"/>
        <end position="387"/>
    </location>
</feature>
<feature type="short sequence motif" description="Bipartite nuclear localization signal" evidence="1">
    <location>
        <begin position="305"/>
        <end position="321"/>
    </location>
</feature>
<feature type="short sequence motif" description="Nuclear export signal" evidence="1">
    <location>
        <begin position="339"/>
        <end position="350"/>
    </location>
</feature>
<feature type="short sequence motif" description="[KR]-[STA]-K motif">
    <location>
        <begin position="370"/>
        <end position="372"/>
    </location>
</feature>
<feature type="compositionally biased region" description="Pro residues" evidence="5">
    <location>
        <begin position="72"/>
        <end position="90"/>
    </location>
</feature>
<feature type="compositionally biased region" description="Basic and acidic residues" evidence="5">
    <location>
        <begin position="283"/>
        <end position="295"/>
    </location>
</feature>
<feature type="compositionally biased region" description="Basic residues" evidence="5">
    <location>
        <begin position="365"/>
        <end position="384"/>
    </location>
</feature>
<feature type="binding site" evidence="3">
    <location>
        <position position="176"/>
    </location>
    <ligand>
        <name>Zn(2+)</name>
        <dbReference type="ChEBI" id="CHEBI:29105"/>
    </ligand>
</feature>
<feature type="binding site" evidence="3">
    <location>
        <position position="179"/>
    </location>
    <ligand>
        <name>Zn(2+)</name>
        <dbReference type="ChEBI" id="CHEBI:29105"/>
    </ligand>
</feature>
<feature type="binding site" evidence="3">
    <location>
        <position position="238"/>
    </location>
    <ligand>
        <name>Zn(2+)</name>
        <dbReference type="ChEBI" id="CHEBI:29105"/>
    </ligand>
</feature>
<feature type="binding site" evidence="3">
    <location>
        <position position="242"/>
    </location>
    <ligand>
        <name>Zn(2+)</name>
        <dbReference type="ChEBI" id="CHEBI:29105"/>
    </ligand>
</feature>
<feature type="site" description="Interaction with DNA" evidence="3">
    <location>
        <position position="120"/>
    </location>
</feature>
<feature type="modified residue" description="Phosphoserine; by HIPK4" evidence="3">
    <location>
        <position position="9"/>
    </location>
</feature>
<feature type="modified residue" description="Phosphoserine; by CDK5, PRPK, AMPK, NUAK1 and ATM" evidence="3">
    <location>
        <position position="15"/>
    </location>
</feature>
<feature type="modified residue" description="Phosphothreonine; by CK1, VRK1 and VRK2" evidence="3">
    <location>
        <position position="18"/>
    </location>
</feature>
<feature type="modified residue" description="Phosphoserine; by CHEK2, CK1 and PLK3" evidence="3">
    <location>
        <position position="20"/>
    </location>
</feature>
<feature type="modified residue" description="Phosphoserine; by CDK5 and CDK7" evidence="3">
    <location>
        <position position="33"/>
    </location>
</feature>
<feature type="modified residue" description="Phosphoserine; by MAPKAPK5" evidence="3">
    <location>
        <position position="37"/>
    </location>
</feature>
<feature type="modified residue" description="Phosphoserine; by CDK5, DYRK2, HIPK2 and PKC/PRKCG" evidence="3">
    <location>
        <position position="46"/>
    </location>
</feature>
<feature type="modified residue" description="Phosphothreonine; by TAF1" evidence="1">
    <location>
        <position position="55"/>
    </location>
</feature>
<feature type="modified residue" description="Phosphothreonine; by TAF1 and GRK5" evidence="1">
    <location>
        <position position="55"/>
    </location>
</feature>
<feature type="modified residue" description="N6-acetyllysine" evidence="3">
    <location>
        <position position="120"/>
    </location>
</feature>
<feature type="modified residue" description="N6-lactoyllysine" evidence="3">
    <location>
        <position position="120"/>
    </location>
</feature>
<feature type="modified residue" description="N6-lactoyllysine" evidence="3">
    <location>
        <position position="139"/>
    </location>
</feature>
<feature type="modified residue" description="Phosphoserine; by AURKB" evidence="3">
    <location>
        <position position="183"/>
    </location>
</feature>
<feature type="modified residue" description="Phosphoserine; by AURKB" evidence="3">
    <location>
        <position position="269"/>
    </location>
</feature>
<feature type="modified residue" description="Phosphothreonine; by AURKB" evidence="3">
    <location>
        <position position="284"/>
    </location>
</feature>
<feature type="modified residue" description="N6-acetyllysine" evidence="3">
    <location>
        <position position="305"/>
    </location>
</feature>
<feature type="modified residue" description="Phosphoserine; by AURKA, CDK1 and CDK2" evidence="3">
    <location>
        <position position="315"/>
    </location>
</feature>
<feature type="modified residue" description="N6-acetyllysine" evidence="2">
    <location>
        <position position="321"/>
    </location>
</feature>
<feature type="modified residue" description="Omega-N-methylarginine" evidence="3">
    <location>
        <position position="333"/>
    </location>
</feature>
<feature type="modified residue" description="Symmetric dimethylarginine" evidence="3">
    <location>
        <position position="335"/>
    </location>
</feature>
<feature type="modified residue" description="Symmetric dimethylarginine" evidence="3">
    <location>
        <position position="337"/>
    </location>
</feature>
<feature type="modified residue" description="N6,N6-dimethyllysine; alternate" evidence="3">
    <location>
        <position position="370"/>
    </location>
</feature>
<feature type="modified residue" description="N6-methyllysine; by SMYD2; alternate" evidence="3">
    <location>
        <position position="370"/>
    </location>
</feature>
<feature type="modified residue" description="N6-methyllysine; by SETD7" evidence="3">
    <location>
        <position position="372"/>
    </location>
</feature>
<feature type="modified residue" description="N6,N6-dimethyllysine; by EHMT1 and EHMT2; alternate" evidence="3">
    <location>
        <position position="373"/>
    </location>
</feature>
<feature type="modified residue" description="N6-acetyllysine; alternate" evidence="3">
    <location>
        <position position="373"/>
    </location>
</feature>
<feature type="modified residue" description="N6-acetyllysine" evidence="3">
    <location>
        <position position="381"/>
    </location>
</feature>
<feature type="modified residue" description="N6,N6-dimethyllysine; alternate" evidence="3">
    <location>
        <position position="382"/>
    </location>
</feature>
<feature type="modified residue" description="N6-acetyllysine; alternate" evidence="3">
    <location>
        <position position="382"/>
    </location>
</feature>
<feature type="modified residue" description="N6-methyllysine; by KMT5A; alternate" evidence="3">
    <location>
        <position position="382"/>
    </location>
</feature>
<feature type="modified residue" description="Phosphoserine; by CK2, CDK2 and NUAK1" evidence="3">
    <location>
        <position position="392"/>
    </location>
</feature>
<feature type="cross-link" description="Glycyl lysine isopeptide (Lys-Gly) (interchain with G-Cter in ubiquitin)" evidence="3">
    <location>
        <position position="24"/>
    </location>
</feature>
<feature type="cross-link" description="Glycyl lysine isopeptide (Lys-Gly) (interchain with G-Cter in ubiquitin)" evidence="3">
    <location>
        <position position="291"/>
    </location>
</feature>
<feature type="cross-link" description="Glycyl lysine isopeptide (Lys-Gly) (interchain with G-Cter in ubiquitin)" evidence="3">
    <location>
        <position position="292"/>
    </location>
</feature>
<feature type="cross-link" description="Glycyl lysine isopeptide (Lys-Gly) (interchain with G-Cter in ubiquitin)" evidence="3">
    <location>
        <position position="351"/>
    </location>
</feature>
<feature type="cross-link" description="Glycyl lysine isopeptide (Lys-Gly) (interchain with G-Cter in ubiquitin)" evidence="3">
    <location>
        <position position="357"/>
    </location>
</feature>
<feature type="cross-link" description="Glycyl lysine isopeptide (Lys-Gly) (interchain with G-Cter in SUMO)" evidence="1">
    <location>
        <position position="386"/>
    </location>
</feature>
<keyword id="KW-0007">Acetylation</keyword>
<keyword id="KW-0010">Activator</keyword>
<keyword id="KW-0053">Apoptosis</keyword>
<keyword id="KW-0090">Biological rhythms</keyword>
<keyword id="KW-0131">Cell cycle</keyword>
<keyword id="KW-0963">Cytoplasm</keyword>
<keyword id="KW-0206">Cytoskeleton</keyword>
<keyword id="KW-0238">DNA-binding</keyword>
<keyword id="KW-0256">Endoplasmic reticulum</keyword>
<keyword id="KW-1017">Isopeptide bond</keyword>
<keyword id="KW-0479">Metal-binding</keyword>
<keyword id="KW-0488">Methylation</keyword>
<keyword id="KW-0496">Mitochondrion</keyword>
<keyword id="KW-1210">Necrosis</keyword>
<keyword id="KW-0539">Nucleus</keyword>
<keyword id="KW-0597">Phosphoprotein</keyword>
<keyword id="KW-0678">Repressor</keyword>
<keyword id="KW-0804">Transcription</keyword>
<keyword id="KW-0805">Transcription regulation</keyword>
<keyword id="KW-0043">Tumor suppressor</keyword>
<keyword id="KW-0832">Ubl conjugation</keyword>
<keyword id="KW-0862">Zinc</keyword>
<reference key="1">
    <citation type="journal article" date="2002" name="Biochem. Biophys. Res. Commun.">
        <title>Somatic mutations in the p53 gene account for the extension of replicative life span of macaque cells.</title>
        <authorList>
            <person name="Shimizu Y."/>
            <person name="Ishida T."/>
        </authorList>
    </citation>
    <scope>NUCLEOTIDE SEQUENCE [MRNA]</scope>
    <source>
        <tissue>Lung</tissue>
    </source>
</reference>
<name>P53_MACFU</name>
<protein>
    <recommendedName>
        <fullName>Cellular tumor antigen p53</fullName>
    </recommendedName>
    <alternativeName>
        <fullName>Tumor suppressor p53</fullName>
    </alternativeName>
</protein>
<sequence length="393" mass="43655">MEEPQSDPSIEPPLSQETFSDLWKLLPENNVLSPLPSQAVDDLMLSPDDLAQWLTEDPGPDEAPRMSEAAPPMAPTPAAPTPAAPAPAPSWPLSSSVPSQKTYHGSYGFRLGFLHSGTAKSVTCTYSPDLNKMFCQLAKTCPVQLWVDSTPPPGSRVRAMAIYKQSQHMTEVVRRCPHHERCSDSDGLAPPQHLIRVEGNLRVEYSDDRNTFRHSVVVPYEPPEVGSDCTTIHYNYMCNSSCMGGMNRRPILTIITLEDSSGNLLGRNSFEVRVCACPGRDRRTEEENFRKKGEPCHQLPPGSTKRALPNNTSSSPQPKKKPLDGEYFTLQIRGRERFEMFRELNEALELKDAQAGKEPAGSRAHSSHLKSKKGQSTSRHKKFMFKTEGPDSD</sequence>
<proteinExistence type="evidence at transcript level"/>
<dbReference type="EMBL" id="AF456344">
    <property type="protein sequence ID" value="AAN64028.1"/>
    <property type="molecule type" value="mRNA"/>
</dbReference>
<dbReference type="BMRB" id="P61260"/>
<dbReference type="SMR" id="P61260"/>
<dbReference type="GO" id="GO:0005813">
    <property type="term" value="C:centrosome"/>
    <property type="evidence" value="ECO:0000250"/>
    <property type="project" value="UniProtKB"/>
</dbReference>
<dbReference type="GO" id="GO:0005737">
    <property type="term" value="C:cytoplasm"/>
    <property type="evidence" value="ECO:0000250"/>
    <property type="project" value="UniProtKB"/>
</dbReference>
<dbReference type="GO" id="GO:0005783">
    <property type="term" value="C:endoplasmic reticulum"/>
    <property type="evidence" value="ECO:0007669"/>
    <property type="project" value="UniProtKB-SubCell"/>
</dbReference>
<dbReference type="GO" id="GO:0005759">
    <property type="term" value="C:mitochondrial matrix"/>
    <property type="evidence" value="ECO:0007669"/>
    <property type="project" value="UniProtKB-SubCell"/>
</dbReference>
<dbReference type="GO" id="GO:0005739">
    <property type="term" value="C:mitochondrion"/>
    <property type="evidence" value="ECO:0000250"/>
    <property type="project" value="UniProtKB"/>
</dbReference>
<dbReference type="GO" id="GO:0005730">
    <property type="term" value="C:nucleolus"/>
    <property type="evidence" value="ECO:0000250"/>
    <property type="project" value="UniProtKB"/>
</dbReference>
<dbReference type="GO" id="GO:0005634">
    <property type="term" value="C:nucleus"/>
    <property type="evidence" value="ECO:0000250"/>
    <property type="project" value="UniProtKB"/>
</dbReference>
<dbReference type="GO" id="GO:0016605">
    <property type="term" value="C:PML body"/>
    <property type="evidence" value="ECO:0007669"/>
    <property type="project" value="UniProtKB-SubCell"/>
</dbReference>
<dbReference type="GO" id="GO:0036310">
    <property type="term" value="F:ATP-dependent DNA/DNA annealing activity"/>
    <property type="evidence" value="ECO:0000250"/>
    <property type="project" value="UniProtKB"/>
</dbReference>
<dbReference type="GO" id="GO:0005507">
    <property type="term" value="F:copper ion binding"/>
    <property type="evidence" value="ECO:0000250"/>
    <property type="project" value="UniProtKB"/>
</dbReference>
<dbReference type="GO" id="GO:0003677">
    <property type="term" value="F:DNA binding"/>
    <property type="evidence" value="ECO:0000250"/>
    <property type="project" value="UniProtKB"/>
</dbReference>
<dbReference type="GO" id="GO:0000981">
    <property type="term" value="F:DNA-binding transcription factor activity, RNA polymerase II-specific"/>
    <property type="evidence" value="ECO:0000250"/>
    <property type="project" value="UniProtKB"/>
</dbReference>
<dbReference type="GO" id="GO:0140693">
    <property type="term" value="F:molecular condensate scaffold activity"/>
    <property type="evidence" value="ECO:0000250"/>
    <property type="project" value="UniProtKB"/>
</dbReference>
<dbReference type="GO" id="GO:1990841">
    <property type="term" value="F:promoter-specific chromatin binding"/>
    <property type="evidence" value="ECO:0000250"/>
    <property type="project" value="UniProtKB"/>
</dbReference>
<dbReference type="GO" id="GO:0000978">
    <property type="term" value="F:RNA polymerase II cis-regulatory region sequence-specific DNA binding"/>
    <property type="evidence" value="ECO:0000250"/>
    <property type="project" value="UniProtKB"/>
</dbReference>
<dbReference type="GO" id="GO:0090398">
    <property type="term" value="P:cellular senescence"/>
    <property type="evidence" value="ECO:0000250"/>
    <property type="project" value="UniProtKB"/>
</dbReference>
<dbReference type="GO" id="GO:0048512">
    <property type="term" value="P:circadian behavior"/>
    <property type="evidence" value="ECO:0000250"/>
    <property type="project" value="UniProtKB"/>
</dbReference>
<dbReference type="GO" id="GO:0006974">
    <property type="term" value="P:DNA damage response"/>
    <property type="evidence" value="ECO:0000250"/>
    <property type="project" value="UniProtKB"/>
</dbReference>
<dbReference type="GO" id="GO:0043153">
    <property type="term" value="P:entrainment of circadian clock by photoperiod"/>
    <property type="evidence" value="ECO:0000250"/>
    <property type="project" value="UniProtKB"/>
</dbReference>
<dbReference type="GO" id="GO:0030308">
    <property type="term" value="P:negative regulation of cell growth"/>
    <property type="evidence" value="ECO:0000250"/>
    <property type="project" value="UniProtKB"/>
</dbReference>
<dbReference type="GO" id="GO:0045892">
    <property type="term" value="P:negative regulation of DNA-templated transcription"/>
    <property type="evidence" value="ECO:0000250"/>
    <property type="project" value="UniProtKB"/>
</dbReference>
<dbReference type="GO" id="GO:0006289">
    <property type="term" value="P:nucleotide-excision repair"/>
    <property type="evidence" value="ECO:0000250"/>
    <property type="project" value="UniProtKB"/>
</dbReference>
<dbReference type="GO" id="GO:0097252">
    <property type="term" value="P:oligodendrocyte apoptotic process"/>
    <property type="evidence" value="ECO:0000250"/>
    <property type="project" value="UniProtKB"/>
</dbReference>
<dbReference type="GO" id="GO:0043065">
    <property type="term" value="P:positive regulation of apoptotic process"/>
    <property type="evidence" value="ECO:0000250"/>
    <property type="project" value="UniProtKB"/>
</dbReference>
<dbReference type="GO" id="GO:2001244">
    <property type="term" value="P:positive regulation of intrinsic apoptotic signaling pathway"/>
    <property type="evidence" value="ECO:0000250"/>
    <property type="project" value="UniProtKB"/>
</dbReference>
<dbReference type="GO" id="GO:0045944">
    <property type="term" value="P:positive regulation of transcription by RNA polymerase II"/>
    <property type="evidence" value="ECO:0000250"/>
    <property type="project" value="UniProtKB"/>
</dbReference>
<dbReference type="GO" id="GO:0051262">
    <property type="term" value="P:protein tetramerization"/>
    <property type="evidence" value="ECO:0007669"/>
    <property type="project" value="InterPro"/>
</dbReference>
<dbReference type="CDD" id="cd08367">
    <property type="entry name" value="P53"/>
    <property type="match status" value="1"/>
</dbReference>
<dbReference type="FunFam" id="2.60.40.720:FF:000003">
    <property type="entry name" value="Cellular tumor antigen p53"/>
    <property type="match status" value="1"/>
</dbReference>
<dbReference type="FunFam" id="4.10.170.10:FF:000003">
    <property type="entry name" value="Cellular tumor antigen p53"/>
    <property type="match status" value="1"/>
</dbReference>
<dbReference type="Gene3D" id="2.60.40.720">
    <property type="match status" value="1"/>
</dbReference>
<dbReference type="Gene3D" id="6.10.50.20">
    <property type="match status" value="1"/>
</dbReference>
<dbReference type="Gene3D" id="4.10.170.10">
    <property type="entry name" value="p53-like tetramerisation domain"/>
    <property type="match status" value="1"/>
</dbReference>
<dbReference type="InterPro" id="IPR008967">
    <property type="entry name" value="p53-like_TF_DNA-bd_sf"/>
</dbReference>
<dbReference type="InterPro" id="IPR012346">
    <property type="entry name" value="p53/RUNT-type_TF_DNA-bd_sf"/>
</dbReference>
<dbReference type="InterPro" id="IPR011615">
    <property type="entry name" value="p53_DNA-bd"/>
</dbReference>
<dbReference type="InterPro" id="IPR040926">
    <property type="entry name" value="p53_TAD2"/>
</dbReference>
<dbReference type="InterPro" id="IPR036674">
    <property type="entry name" value="p53_tetramer_sf"/>
</dbReference>
<dbReference type="InterPro" id="IPR010991">
    <property type="entry name" value="p53_tetrameristn"/>
</dbReference>
<dbReference type="InterPro" id="IPR013872">
    <property type="entry name" value="p53_transactivation_domain"/>
</dbReference>
<dbReference type="InterPro" id="IPR002117">
    <property type="entry name" value="p53_tumour_suppressor"/>
</dbReference>
<dbReference type="PANTHER" id="PTHR11447">
    <property type="entry name" value="CELLULAR TUMOR ANTIGEN P53"/>
    <property type="match status" value="1"/>
</dbReference>
<dbReference type="PANTHER" id="PTHR11447:SF6">
    <property type="entry name" value="CELLULAR TUMOR ANTIGEN P53"/>
    <property type="match status" value="1"/>
</dbReference>
<dbReference type="Pfam" id="PF00870">
    <property type="entry name" value="P53"/>
    <property type="match status" value="1"/>
</dbReference>
<dbReference type="Pfam" id="PF08563">
    <property type="entry name" value="P53_TAD"/>
    <property type="match status" value="1"/>
</dbReference>
<dbReference type="Pfam" id="PF07710">
    <property type="entry name" value="P53_tetramer"/>
    <property type="match status" value="1"/>
</dbReference>
<dbReference type="Pfam" id="PF18521">
    <property type="entry name" value="TAD2"/>
    <property type="match status" value="1"/>
</dbReference>
<dbReference type="PRINTS" id="PR00386">
    <property type="entry name" value="P53SUPPRESSR"/>
</dbReference>
<dbReference type="SUPFAM" id="SSF47719">
    <property type="entry name" value="p53 tetramerization domain"/>
    <property type="match status" value="1"/>
</dbReference>
<dbReference type="SUPFAM" id="SSF49417">
    <property type="entry name" value="p53-like transcription factors"/>
    <property type="match status" value="1"/>
</dbReference>
<dbReference type="PROSITE" id="PS00348">
    <property type="entry name" value="P53"/>
    <property type="match status" value="1"/>
</dbReference>
<comment type="function">
    <text evidence="2 3">Multifunctional transcription factor that induces cell cycle arrest, DNA repair or apoptosis upon binding to its target DNA sequence. Acts as a tumor suppressor in many tumor types; induces growth arrest or apoptosis depending on the physiological circumstances and cell type. Negatively regulates cell division by controlling expression of a set of genes required for this process. One of the activated genes is an inhibitor of cyclin-dependent kinases. Apoptosis induction seems to be mediated either by stimulation of BAX and FAS antigen expression, or by repression of Bcl-2 expression. In cooperation with mitochondrial PPIF is involved in activating oxidative stress-induced necrosis; the function is largely independent of transcription. Prevents CDK7 kinase activity when associated to CAK complex in response to DNA damage, thus stopping cell cycle progression. Induces the transcription of long intergenic non-coding RNA p21 (lincRNA-p21) and lincRNA-Mkln1. LincRNA-p21 participates in TP53-dependent transcriptional repression leading to apoptosis and seems to have an effect on cell-cycle regulation. Regulates the circadian clock by repressing CLOCK-BMAL1-mediated transcriptional activation of PER2.</text>
</comment>
<comment type="cofactor">
    <cofactor evidence="1">
        <name>Zn(2+)</name>
        <dbReference type="ChEBI" id="CHEBI:29105"/>
    </cofactor>
    <text evidence="1">Binds 1 zinc ion per subunit.</text>
</comment>
<comment type="subunit">
    <text evidence="2 3 4">Forms homodimers and homotetramers (By similarity). Binds DNA as a homotetramer. Interacts with AXIN1. Probably part of a complex consisting of TP53, HIPK2 and AXIN1. Interacts with histone acetyltransferases EP300 and methyltransferases HRMT1L2 and CARM1, and recruits them to promoters. Interacts (via C-terminus) with TAF1; when TAF1 is part of the TFIID complex. Interacts with ING4; this interaction may be indirect. Found in a complex with CABLES1 and TP73. Interacts with HIPK1, HIPK2, and TP53INP1. Interacts with WWOX. Interacts with USP7 and SYVN1. Interacts with HSP90AB1. Interacts with CHD8; leading to recruit histone H1 and prevent transactivation activity. Interacts with ARMC10, BANP, CDKN2AIP, NUAK1, STK11/LKB1, UHRF2 and E4F. Interacts with YWHAZ; the interaction enhances TP53 transcriptional activity. Phosphorylation of YWHAZ on 'Ser-58' inhibits this interaction. Interacts (via DNA-binding domain) with MAML1 (via N-terminus). Interacts with MKRN1. Interacts with PML (via C-terminus). Interacts with MDM2; leading to ubiquitination and proteasomal degradation of TP53. Directly interacts with FBXO42; leading to ubiquitination and degradation of TP53. Interacts (phosphorylated at Ser-15 by ATM) with the phosphatase PP2A-PPP2R5C holoenzyme; regulates stress-induced TP53-dependent inhibition of cell proliferation. Interacts with PPP2R2A. Interacts with AURKA, DAXX, BRD7 and TRIM24. Interacts (when monomethylated at Lys-382) with L3MBTL1. Interacts with GRK5. Binds to the CAK complex (CDK7, cyclin H and MAT1) in response to DNA damage. Interacts with CDK5 in neurons. Interacts with AURKB, SETD2, UHRF2 and NOC2L. Interacts (via N-terminus) with PTK2/FAK1; this promotes ubiquitination by MDM2. Interacts with PTK2B/PYK2; this promotes ubiquitination by MDM2. Interacts with PRKCG. Interacts with PPIF; the association implicates preferentially tetrameric TP53, is induced by oxidative stress and is impaired by cyclosporin A (CsA). Interacts with SNAI1; the interaction induces SNAI1 degradation via MDM2-mediated ubiquitination and inhibits SNAI1-induced cell invasion. Interacts with UBC9. Interacts with ZNF385B; the interaction is direct. Interacts (via DNA-binding domain) with ZNF385A; the interaction is direct and enhances p53/TP53 transactivation functions on cell-cycle arrest target genes, resulting in growth arrest (By similarity). Interacts with ANKRD2. Interacts with RFFL and RNF34; involved in p53/TP53 ubiquitination. Interacts with MTA1 and COP1. Interacts with CCAR2 (via N-terminus). Interacts with MORC3. Interacts (via C-terminus) with POU4F2 (via C-terminus). Interacts (via oligomerization region) with NOP53; the interaction is direct and may prevent the MDM2-mediated proteasomal degradation of TP53. Interacts with AFG1L; mediates mitochondrial translocation of TP53. Interacts with UBD (By similarity). Interacts with TAF6 (By similarity). Interacts with C10orf90/FATS; the interaction inhibits binding of TP53 and MDM2 (By similarity). Interacts with NUPR1; interaction is stress-dependent. Forms a complex with EP300 and NUPR1; this complex binds CDKN1A promoter leading to transcriptional induction of CDKN1A (By similarity). Interacts with PRMT5 in response to DNA damage; the interaction is TTC5/STRAP dependent (By similarity). When phosphorylated at Ser-15, interacts with DDX3X and gamma-tubulin (By similarity). Interacts with KAT7/HBO1; leading to inhibit histone acetyltransferase activity of KAT7/HBO1 (By similarity). Interacts (via N-terminus) with E3 ubiquitin-protein ligase MUL1; the interaction results in ubiquitination of cytoplasmic TP53 at Lys-24 and subsequent proteasomal degradation (By similarity). Interacts with S100A4; this interaction promotes TP53 degradation (By similarity). Interacts with TTC5/STRAP; the interaction may result in increased mitochondrial-dependent apoptosis (By similarity). Interacts with NQO1; this interaction is NADH-dependent, stabilizes TP53 in response to oxidative stress and protects it from ubiquitin-independent degradation by the 20S proteasome (By similarity). Interacts with DAZAP2 at TP53 target gene promoters; the interaction is triggered by DNA damage and leads to modulation of the expression of a subset of TP53 target genes, reducing DNA damage-induced cell death by limiting the expression of cell death-mediating TP53 target genes (By similarity). Interacts (via N-terminus) with ZNF768 (via zinc-finger domains); interaction might be facilitated by TP53 oligomerization state (By similarity). Forms a ternary complex with ALDOB and G6PD; this interaction is direct. ALDOB stabilizes the complex inhibiting G6PD activity and keeping oxidative pentose phosphate metabolism in check. Interacts with MORN3; the interactions mediate post-transcriptional modifications of TP53 by MDM2 and SIRT1 (By similarity). Interacts with HSPA9/MOT-2; the interaction promotes the degradation of TP53 (By similarity). Interacts with FBXO22; this interaction promotes TP53 proteasomal degradation (By similarity).</text>
</comment>
<comment type="subcellular location">
    <subcellularLocation>
        <location evidence="3">Cytoplasm</location>
    </subcellularLocation>
    <subcellularLocation>
        <location evidence="3">Nucleus</location>
    </subcellularLocation>
    <subcellularLocation>
        <location evidence="3">Nucleus</location>
        <location evidence="3">PML body</location>
    </subcellularLocation>
    <subcellularLocation>
        <location evidence="3">Endoplasmic reticulum</location>
    </subcellularLocation>
    <subcellularLocation>
        <location evidence="3">Mitochondrion matrix</location>
    </subcellularLocation>
    <subcellularLocation>
        <location evidence="3">Cytoplasm</location>
        <location evidence="3">Cytoskeleton</location>
        <location evidence="3">Microtubule organizing center</location>
        <location evidence="3">Centrosome</location>
    </subcellularLocation>
    <text evidence="3">Interaction with BANP promotes nuclear localization. Recruited into PML bodies together with CHEK2. Translocates to mitochondria upon oxidative stress. Translocates to mitochondria in response to mitomycin C treatment (By similarity). Competitive inhibition of TP53 interaction with HSPA9/MOT-2 by UBXN2A results in increased protein abundance and subsequent translocation of TP53 to the nucleus (By similarity).</text>
</comment>
<comment type="domain">
    <text evidence="3">The N-terminal and C-terminal disordered regions undergo liquid-liquid phase separation (LLPS) following homotetramerization and activation. Post-translational modifications, such as phosphorylation or lactylation affect the ability to undergo LLPS.</text>
</comment>
<comment type="domain">
    <text evidence="3">The nuclear export signal acts as a transcriptional repression domain. The TADI and TADII motifs (residues 17 to 25 and 48 to 56) correspond both to 9aaTAD motifs which are transactivation domains present in a large number of yeast and animal transcription factors.</text>
</comment>
<comment type="PTM">
    <text evidence="1 3">Phosphorylation on Ser residues mediates transcriptional activation. Phosphorylation at Ser-9 by HIPK4 increases repression activity on BIRC5 promoter (By similarity). Phosphorylated on Thr-18 by VRK1, which may prevent the interaction with MDM2. Phosphorylated on Ser-20 by CHEK2 in response to DNA damage, which prevents ubiquitination by MDM2. Phosphorylated on Ser-20 by PLK3 in response to reactive oxygen species (ROS), promoting p53/TP53-mediated apoptosis. Phosphorylated on Ser-392 following UV but not gamma irradiation. Phosphorylated on Thr-55 by TAF1 which promotes MDM2-mediated TP53 degradation. Phosphorylated on Ser-33 by CDK7 in a CAK complex in response to DNA damage. Stabilized by CDK5-mediated phosphorylation in response to genotoxic and oxidative stresses at Ser-15, Ser-33 and Ser-46, leading to accumulation of p53/TP53, particularly in the nucleus, thus inducing the transactivation of p53/TP53 target genes. Phosphorylated by DYRK2 at Ser-46 in response to genotoxic stress. Phosphorylated at Ser-315 and Ser-392 by CDK2 in response to DNA-damage (By similarity). Phosphorylation at Ser-15 is required for interaction with DDX3X and gamma-tubulin (By similarity). Phosphorylation at Ser-392 regulates its ability to undergo liquid-liquid phase separation by increasing fluidity of TP53/p53 condensates (By similarity).</text>
</comment>
<comment type="PTM">
    <text evidence="3">Monomethylated at Lys-372 by SETD7, leading to stabilization and increased transcriptional activation. Monomethylated at Lys-370 by SMYD2, leading to decreased DNA-binding activity and subsequent transcriptional regulation activity. Lys-372 monomethylation prevents interaction with SMYD2 and subsequent monomethylation at Lys-370. Dimethylated at Lys-373 by EHMT1 and EHMT2. Monomethylated at Lys-382 by KMT5A, promoting interaction with L3MBTL1 and leading to repress transcriptional activity. Demethylation of dimethylated Lys-370 by KDM1A prevents interaction with TP53BP1 and represses TP53-mediated transcriptional activation (By similarity). Monomethylated at Arg-333 and dimethylated at Arg-335 and Arg-337 by PRMT5; methylation is increased after DNA damage and might possibly affect TP53 target gene specificity (By similarity).</text>
</comment>
<comment type="PTM">
    <text evidence="1">Sumoylated with SUMO1. Sumoylated at Lys-386 by UBC9 (By similarity).</text>
</comment>
<comment type="PTM">
    <text evidence="2 3">Ubiquitinated by MDM2 and SYVN1, which leads to proteasomal degradation. Ubiquitinated by RFWD3, which works in cooperation with MDM2 and may catalyze the formation of short polyubiquitin chains on p53/TP53 that are not targeted to the proteasome. Ubiquitinated by MKRN1, which leads to proteasomal degradation. Deubiquitinated by USP10, leading to stabilize it. Ubiquitinated by TRIM24, RFFL, RNF34 and RNF125, which leads to proteasomal degradation. Ubiquitination by TOPORS induces degradation. Deubiquitination by USP7, leading to stabilize it. Ubiquitinated by COP1, which leads to proteasomal degradation (By similarity). Ubiquitination and subsequent proteasomal degradation is negatively regulated by CCAR2 (By similarity). Polyubiquitinated by C10orf90/FATS, polyubiquitination is 'Lys-48'-linkage independent and non-proteolytic, leading to TP53 stabilization (By similarity). Polyubiquitinated by MUL1 at Lys-24 which leads to proteasomal degradation (By similarity). Deubiquitinated by USP3, leading to stabilization (By similarity). Ubiquitinated by MSL2, promoting its cytoplasmic localization (By similarity). Also ubiquitinated by the SCF(FBXO22)-KDMA4A complex; leading to proteasomal degradation (By similarity).</text>
</comment>
<comment type="PTM">
    <text evidence="3">Acetylation of Lys-382 by CREBBP enhances transcriptional activity. Acetylation of Lys-382 by EP300. Deacetylation of Lys-382 by SIRT1 impairs its ability to induce proapoptotic program and modulate cell senescence. Deacetylation by SIRT2 impairs its ability to induce transcription activation in a AKT-dependent manner. Acetylation at Lys-381 increases stability. Deacetylation at Lys-381 by SIRT6 decreases its stability, thereby regulating cell senescence. Acetylated at Lys-120 by KAT5, KAT6A and KAT8; regulating its ability to induce proapoptotic program.</text>
</comment>
<comment type="PTM">
    <text evidence="3">Lactylation by AARS1 prevents ability to undergo liquid-liquid phase separation (LLPS), thereby inhibiting transcription factor activity.</text>
</comment>
<comment type="disease">
    <text>p53 is found in increased amounts in a wide variety of transformed cells. p53 is frequently mutated or inactivated in many types of cancer.</text>
</comment>
<comment type="similarity">
    <text evidence="6">Belongs to the p53 family.</text>
</comment>